<feature type="initiator methionine" description="Removed" evidence="1">
    <location>
        <position position="1"/>
    </location>
</feature>
<feature type="chain" id="PRO_0000068043" description="Dihydrolipoyl dehydrogenase">
    <location>
        <begin position="2"/>
        <end position="474"/>
    </location>
</feature>
<feature type="active site" description="Proton acceptor" evidence="1">
    <location>
        <position position="445"/>
    </location>
</feature>
<feature type="binding site" evidence="1">
    <location>
        <begin position="36"/>
        <end position="45"/>
    </location>
    <ligand>
        <name>FAD</name>
        <dbReference type="ChEBI" id="CHEBI:57692"/>
    </ligand>
</feature>
<feature type="binding site" evidence="1">
    <location>
        <position position="54"/>
    </location>
    <ligand>
        <name>FAD</name>
        <dbReference type="ChEBI" id="CHEBI:57692"/>
    </ligand>
</feature>
<feature type="binding site" evidence="1">
    <location>
        <position position="117"/>
    </location>
    <ligand>
        <name>FAD</name>
        <dbReference type="ChEBI" id="CHEBI:57692"/>
    </ligand>
</feature>
<feature type="binding site" evidence="1">
    <location>
        <begin position="182"/>
        <end position="186"/>
    </location>
    <ligand>
        <name>NAD(+)</name>
        <dbReference type="ChEBI" id="CHEBI:57540"/>
    </ligand>
</feature>
<feature type="binding site" evidence="1">
    <location>
        <position position="205"/>
    </location>
    <ligand>
        <name>NAD(+)</name>
        <dbReference type="ChEBI" id="CHEBI:57540"/>
    </ligand>
</feature>
<feature type="binding site" evidence="1">
    <location>
        <position position="238"/>
    </location>
    <ligand>
        <name>NAD(+)</name>
        <dbReference type="ChEBI" id="CHEBI:57540"/>
    </ligand>
</feature>
<feature type="binding site" evidence="1">
    <location>
        <begin position="270"/>
        <end position="273"/>
    </location>
    <ligand>
        <name>NAD(+)</name>
        <dbReference type="ChEBI" id="CHEBI:57540"/>
    </ligand>
</feature>
<feature type="binding site" evidence="1">
    <location>
        <position position="313"/>
    </location>
    <ligand>
        <name>FAD</name>
        <dbReference type="ChEBI" id="CHEBI:57692"/>
    </ligand>
</feature>
<feature type="binding site" evidence="1">
    <location>
        <position position="321"/>
    </location>
    <ligand>
        <name>FAD</name>
        <dbReference type="ChEBI" id="CHEBI:57692"/>
    </ligand>
</feature>
<feature type="modified residue" description="N6-acetyllysine" evidence="1">
    <location>
        <position position="220"/>
    </location>
</feature>
<feature type="disulfide bond" description="Redox-active" evidence="1">
    <location>
        <begin position="45"/>
        <end position="50"/>
    </location>
</feature>
<sequence length="474" mass="50688">MSTEIKTQVVVLGAGPAGYSAAFRCADLGLETVIVERYNTLGGVCLNVGCIPSKALLHVAKVIEEAKALAEHGIVFGEPKTDIDKIRTWKEKVINQLTGGLAGMAKGRKVKVVNGLGKFTGANTLEVEGENGKTVINFDNAIIAAGSRPIQLPFIPHEDPRIWDSTDALELKEVPERLLVMGGGIIGLEMGTVYHALGSQIDVVEMFDQVIPAADKDIVKVFTKRISKKFNLMLETKVTAVEAKEDGIYVTMEGKKAPAEPQRYDAVLVAIGRVPNGKNLDAGKAGVEVDDRGFIRVDKQLRTNVPHIFAIGDIVGQPMLAHKGVHEGHVAAEVIAGKKHYFDPKVIPSIAYTEPEVAWVGLTEKEAKEKGISYETATFPWAASGRAIASDCADGMTKLIFDKESHRVIGGAIVGTNGGELLGEIGLAIEMGCDAEDIALTIHAHPTLHESVGLAAEVFEGSITDLPNPKAKKK</sequence>
<name>DLDH_SHIFL</name>
<keyword id="KW-0007">Acetylation</keyword>
<keyword id="KW-0963">Cytoplasm</keyword>
<keyword id="KW-1015">Disulfide bond</keyword>
<keyword id="KW-0274">FAD</keyword>
<keyword id="KW-0285">Flavoprotein</keyword>
<keyword id="KW-0520">NAD</keyword>
<keyword id="KW-0560">Oxidoreductase</keyword>
<keyword id="KW-0676">Redox-active center</keyword>
<keyword id="KW-1185">Reference proteome</keyword>
<protein>
    <recommendedName>
        <fullName>Dihydrolipoyl dehydrogenase</fullName>
        <ecNumber>1.8.1.4</ecNumber>
    </recommendedName>
    <alternativeName>
        <fullName>Dihydrolipoamide dehydrogenase</fullName>
    </alternativeName>
    <alternativeName>
        <fullName>E3 component of pyruvate and 2-oxoglutarate dehydrogenases complexes</fullName>
    </alternativeName>
    <alternativeName>
        <fullName>Glycine cleavage system L protein</fullName>
    </alternativeName>
</protein>
<evidence type="ECO:0000250" key="1"/>
<evidence type="ECO:0000305" key="2"/>
<gene>
    <name type="primary">lpdA</name>
    <name type="ordered locus">SF0113</name>
    <name type="ordered locus">S0115</name>
</gene>
<accession>P0A9P3</accession>
<accession>P00391</accession>
<comment type="function">
    <text evidence="1">Lipoamide dehydrogenase is a component of the glycine cleavage system as well as of the alpha-ketoacid dehydrogenase complexes.</text>
</comment>
<comment type="catalytic activity">
    <reaction>
        <text>N(6)-[(R)-dihydrolipoyl]-L-lysyl-[protein] + NAD(+) = N(6)-[(R)-lipoyl]-L-lysyl-[protein] + NADH + H(+)</text>
        <dbReference type="Rhea" id="RHEA:15045"/>
        <dbReference type="Rhea" id="RHEA-COMP:10474"/>
        <dbReference type="Rhea" id="RHEA-COMP:10475"/>
        <dbReference type="ChEBI" id="CHEBI:15378"/>
        <dbReference type="ChEBI" id="CHEBI:57540"/>
        <dbReference type="ChEBI" id="CHEBI:57945"/>
        <dbReference type="ChEBI" id="CHEBI:83099"/>
        <dbReference type="ChEBI" id="CHEBI:83100"/>
        <dbReference type="EC" id="1.8.1.4"/>
    </reaction>
</comment>
<comment type="cofactor">
    <cofactor evidence="1">
        <name>FAD</name>
        <dbReference type="ChEBI" id="CHEBI:57692"/>
    </cofactor>
    <text evidence="1">Binds 1 FAD per subunit.</text>
</comment>
<comment type="subunit">
    <text evidence="1">Homodimer.</text>
</comment>
<comment type="subcellular location">
    <subcellularLocation>
        <location evidence="1">Cytoplasm</location>
    </subcellularLocation>
</comment>
<comment type="miscellaneous">
    <text evidence="1">The active site is a redox-active disulfide bond.</text>
</comment>
<comment type="similarity">
    <text evidence="2">Belongs to the class-I pyridine nucleotide-disulfide oxidoreductase family.</text>
</comment>
<reference key="1">
    <citation type="journal article" date="2002" name="Nucleic Acids Res.">
        <title>Genome sequence of Shigella flexneri 2a: insights into pathogenicity through comparison with genomes of Escherichia coli K12 and O157.</title>
        <authorList>
            <person name="Jin Q."/>
            <person name="Yuan Z."/>
            <person name="Xu J."/>
            <person name="Wang Y."/>
            <person name="Shen Y."/>
            <person name="Lu W."/>
            <person name="Wang J."/>
            <person name="Liu H."/>
            <person name="Yang J."/>
            <person name="Yang F."/>
            <person name="Zhang X."/>
            <person name="Zhang J."/>
            <person name="Yang G."/>
            <person name="Wu H."/>
            <person name="Qu D."/>
            <person name="Dong J."/>
            <person name="Sun L."/>
            <person name="Xue Y."/>
            <person name="Zhao A."/>
            <person name="Gao Y."/>
            <person name="Zhu J."/>
            <person name="Kan B."/>
            <person name="Ding K."/>
            <person name="Chen S."/>
            <person name="Cheng H."/>
            <person name="Yao Z."/>
            <person name="He B."/>
            <person name="Chen R."/>
            <person name="Ma D."/>
            <person name="Qiang B."/>
            <person name="Wen Y."/>
            <person name="Hou Y."/>
            <person name="Yu J."/>
        </authorList>
    </citation>
    <scope>NUCLEOTIDE SEQUENCE [LARGE SCALE GENOMIC DNA]</scope>
    <source>
        <strain>301 / Serotype 2a</strain>
    </source>
</reference>
<reference key="2">
    <citation type="journal article" date="2003" name="Infect. Immun.">
        <title>Complete genome sequence and comparative genomics of Shigella flexneri serotype 2a strain 2457T.</title>
        <authorList>
            <person name="Wei J."/>
            <person name="Goldberg M.B."/>
            <person name="Burland V."/>
            <person name="Venkatesan M.M."/>
            <person name="Deng W."/>
            <person name="Fournier G."/>
            <person name="Mayhew G.F."/>
            <person name="Plunkett G. III"/>
            <person name="Rose D.J."/>
            <person name="Darling A."/>
            <person name="Mau B."/>
            <person name="Perna N.T."/>
            <person name="Payne S.M."/>
            <person name="Runyen-Janecky L.J."/>
            <person name="Zhou S."/>
            <person name="Schwartz D.C."/>
            <person name="Blattner F.R."/>
        </authorList>
    </citation>
    <scope>NUCLEOTIDE SEQUENCE [LARGE SCALE GENOMIC DNA]</scope>
    <source>
        <strain>ATCC 700930 / 2457T / Serotype 2a</strain>
    </source>
</reference>
<dbReference type="EC" id="1.8.1.4"/>
<dbReference type="EMBL" id="AE005674">
    <property type="protein sequence ID" value="AAN41777.2"/>
    <property type="molecule type" value="Genomic_DNA"/>
</dbReference>
<dbReference type="EMBL" id="AE014073">
    <property type="protein sequence ID" value="AAP15658.1"/>
    <property type="molecule type" value="Genomic_DNA"/>
</dbReference>
<dbReference type="RefSeq" id="NP_706070.2">
    <property type="nucleotide sequence ID" value="NC_004337.2"/>
</dbReference>
<dbReference type="RefSeq" id="WP_000102485.1">
    <property type="nucleotide sequence ID" value="NZ_WPGW01000007.1"/>
</dbReference>
<dbReference type="SMR" id="P0A9P3"/>
<dbReference type="STRING" id="198214.SF0113"/>
<dbReference type="PaxDb" id="198214-SF0113"/>
<dbReference type="GeneID" id="1024526"/>
<dbReference type="GeneID" id="93777320"/>
<dbReference type="KEGG" id="sfl:SF0113"/>
<dbReference type="KEGG" id="sfx:S0115"/>
<dbReference type="PATRIC" id="fig|198214.7.peg.127"/>
<dbReference type="HOGENOM" id="CLU_016755_0_3_6"/>
<dbReference type="Proteomes" id="UP000001006">
    <property type="component" value="Chromosome"/>
</dbReference>
<dbReference type="Proteomes" id="UP000002673">
    <property type="component" value="Chromosome"/>
</dbReference>
<dbReference type="GO" id="GO:0005737">
    <property type="term" value="C:cytoplasm"/>
    <property type="evidence" value="ECO:0007669"/>
    <property type="project" value="UniProtKB-SubCell"/>
</dbReference>
<dbReference type="GO" id="GO:0004148">
    <property type="term" value="F:dihydrolipoyl dehydrogenase (NADH) activity"/>
    <property type="evidence" value="ECO:0007669"/>
    <property type="project" value="UniProtKB-EC"/>
</dbReference>
<dbReference type="GO" id="GO:0050660">
    <property type="term" value="F:flavin adenine dinucleotide binding"/>
    <property type="evidence" value="ECO:0007669"/>
    <property type="project" value="InterPro"/>
</dbReference>
<dbReference type="GO" id="GO:0006103">
    <property type="term" value="P:2-oxoglutarate metabolic process"/>
    <property type="evidence" value="ECO:0007669"/>
    <property type="project" value="TreeGrafter"/>
</dbReference>
<dbReference type="FunFam" id="3.30.390.30:FF:000001">
    <property type="entry name" value="Dihydrolipoyl dehydrogenase"/>
    <property type="match status" value="1"/>
</dbReference>
<dbReference type="FunFam" id="3.50.50.60:FF:000014">
    <property type="entry name" value="Dihydrolipoyl dehydrogenase"/>
    <property type="match status" value="1"/>
</dbReference>
<dbReference type="FunFam" id="3.50.50.60:FF:000001">
    <property type="entry name" value="Dihydrolipoyl dehydrogenase, mitochondrial"/>
    <property type="match status" value="1"/>
</dbReference>
<dbReference type="Gene3D" id="3.30.390.30">
    <property type="match status" value="1"/>
</dbReference>
<dbReference type="Gene3D" id="3.50.50.60">
    <property type="entry name" value="FAD/NAD(P)-binding domain"/>
    <property type="match status" value="2"/>
</dbReference>
<dbReference type="InterPro" id="IPR050151">
    <property type="entry name" value="Class-I_Pyr_Nuc-Dis_Oxidored"/>
</dbReference>
<dbReference type="InterPro" id="IPR036188">
    <property type="entry name" value="FAD/NAD-bd_sf"/>
</dbReference>
<dbReference type="InterPro" id="IPR023753">
    <property type="entry name" value="FAD/NAD-binding_dom"/>
</dbReference>
<dbReference type="InterPro" id="IPR016156">
    <property type="entry name" value="FAD/NAD-linked_Rdtase_dimer_sf"/>
</dbReference>
<dbReference type="InterPro" id="IPR006258">
    <property type="entry name" value="Lipoamide_DH"/>
</dbReference>
<dbReference type="InterPro" id="IPR001100">
    <property type="entry name" value="Pyr_nuc-diS_OxRdtase"/>
</dbReference>
<dbReference type="InterPro" id="IPR004099">
    <property type="entry name" value="Pyr_nucl-diS_OxRdtase_dimer"/>
</dbReference>
<dbReference type="InterPro" id="IPR012999">
    <property type="entry name" value="Pyr_OxRdtase_I_AS"/>
</dbReference>
<dbReference type="NCBIfam" id="TIGR01350">
    <property type="entry name" value="lipoamide_DH"/>
    <property type="match status" value="1"/>
</dbReference>
<dbReference type="PANTHER" id="PTHR22912:SF160">
    <property type="entry name" value="DIHYDROLIPOYL DEHYDROGENASE"/>
    <property type="match status" value="1"/>
</dbReference>
<dbReference type="PANTHER" id="PTHR22912">
    <property type="entry name" value="DISULFIDE OXIDOREDUCTASE"/>
    <property type="match status" value="1"/>
</dbReference>
<dbReference type="Pfam" id="PF07992">
    <property type="entry name" value="Pyr_redox_2"/>
    <property type="match status" value="1"/>
</dbReference>
<dbReference type="Pfam" id="PF02852">
    <property type="entry name" value="Pyr_redox_dim"/>
    <property type="match status" value="1"/>
</dbReference>
<dbReference type="PIRSF" id="PIRSF000350">
    <property type="entry name" value="Mercury_reductase_MerA"/>
    <property type="match status" value="1"/>
</dbReference>
<dbReference type="PRINTS" id="PR00368">
    <property type="entry name" value="FADPNR"/>
</dbReference>
<dbReference type="PRINTS" id="PR00411">
    <property type="entry name" value="PNDRDTASEI"/>
</dbReference>
<dbReference type="SUPFAM" id="SSF51905">
    <property type="entry name" value="FAD/NAD(P)-binding domain"/>
    <property type="match status" value="1"/>
</dbReference>
<dbReference type="SUPFAM" id="SSF55424">
    <property type="entry name" value="FAD/NAD-linked reductases, dimerisation (C-terminal) domain"/>
    <property type="match status" value="1"/>
</dbReference>
<dbReference type="PROSITE" id="PS00076">
    <property type="entry name" value="PYRIDINE_REDOX_1"/>
    <property type="match status" value="1"/>
</dbReference>
<proteinExistence type="inferred from homology"/>
<organism>
    <name type="scientific">Shigella flexneri</name>
    <dbReference type="NCBI Taxonomy" id="623"/>
    <lineage>
        <taxon>Bacteria</taxon>
        <taxon>Pseudomonadati</taxon>
        <taxon>Pseudomonadota</taxon>
        <taxon>Gammaproteobacteria</taxon>
        <taxon>Enterobacterales</taxon>
        <taxon>Enterobacteriaceae</taxon>
        <taxon>Shigella</taxon>
    </lineage>
</organism>